<organism>
    <name type="scientific">Bacillus subtilis (strain 168)</name>
    <dbReference type="NCBI Taxonomy" id="224308"/>
    <lineage>
        <taxon>Bacteria</taxon>
        <taxon>Bacillati</taxon>
        <taxon>Bacillota</taxon>
        <taxon>Bacilli</taxon>
        <taxon>Bacillales</taxon>
        <taxon>Bacillaceae</taxon>
        <taxon>Bacillus</taxon>
    </lineage>
</organism>
<protein>
    <recommendedName>
        <fullName>Endospore coat-associated protein YheC</fullName>
    </recommendedName>
</protein>
<keyword id="KW-0472">Membrane</keyword>
<keyword id="KW-1185">Reference proteome</keyword>
<keyword id="KW-0749">Sporulation</keyword>
<proteinExistence type="inferred from homology"/>
<gene>
    <name type="primary">yheC</name>
    <name type="ordered locus">BSU09780</name>
</gene>
<dbReference type="EMBL" id="Y14080">
    <property type="protein sequence ID" value="CAA74446.1"/>
    <property type="molecule type" value="Genomic_DNA"/>
</dbReference>
<dbReference type="EMBL" id="AL009126">
    <property type="protein sequence ID" value="CAB12817.1"/>
    <property type="molecule type" value="Genomic_DNA"/>
</dbReference>
<dbReference type="PIR" id="C69828">
    <property type="entry name" value="C69828"/>
</dbReference>
<dbReference type="FunCoup" id="O07544">
    <property type="interactions" value="12"/>
</dbReference>
<dbReference type="STRING" id="224308.BSU09780"/>
<dbReference type="PaxDb" id="224308-BSU09780"/>
<dbReference type="EnsemblBacteria" id="CAB12817">
    <property type="protein sequence ID" value="CAB12817"/>
    <property type="gene ID" value="BSU_09780"/>
</dbReference>
<dbReference type="GeneID" id="939293"/>
<dbReference type="KEGG" id="bsu:BSU09780"/>
<dbReference type="PATRIC" id="fig|224308.179.peg.1051"/>
<dbReference type="eggNOG" id="COG0189">
    <property type="taxonomic scope" value="Bacteria"/>
</dbReference>
<dbReference type="InParanoid" id="O07544"/>
<dbReference type="OrthoDB" id="7869153at2"/>
<dbReference type="PhylomeDB" id="O07544"/>
<dbReference type="BioCyc" id="BSUB:BSU09780-MONOMER"/>
<dbReference type="Proteomes" id="UP000001570">
    <property type="component" value="Chromosome"/>
</dbReference>
<dbReference type="GO" id="GO:0016020">
    <property type="term" value="C:membrane"/>
    <property type="evidence" value="ECO:0007669"/>
    <property type="project" value="UniProtKB-KW"/>
</dbReference>
<dbReference type="GO" id="GO:0005524">
    <property type="term" value="F:ATP binding"/>
    <property type="evidence" value="ECO:0007669"/>
    <property type="project" value="InterPro"/>
</dbReference>
<dbReference type="GO" id="GO:0003824">
    <property type="term" value="F:catalytic activity"/>
    <property type="evidence" value="ECO:0007669"/>
    <property type="project" value="UniProtKB-ARBA"/>
</dbReference>
<dbReference type="GO" id="GO:0030435">
    <property type="term" value="P:sporulation resulting in formation of a cellular spore"/>
    <property type="evidence" value="ECO:0007669"/>
    <property type="project" value="UniProtKB-KW"/>
</dbReference>
<dbReference type="Gene3D" id="3.30.1490.20">
    <property type="entry name" value="ATP-grasp fold, A domain"/>
    <property type="match status" value="1"/>
</dbReference>
<dbReference type="InterPro" id="IPR013815">
    <property type="entry name" value="ATP_grasp_subdomain_1"/>
</dbReference>
<dbReference type="InterPro" id="IPR026838">
    <property type="entry name" value="YheC/D"/>
</dbReference>
<dbReference type="Pfam" id="PF14398">
    <property type="entry name" value="ATPgrasp_YheCD"/>
    <property type="match status" value="1"/>
</dbReference>
<dbReference type="SUPFAM" id="SSF56059">
    <property type="entry name" value="Glutathione synthetase ATP-binding domain-like"/>
    <property type="match status" value="1"/>
</dbReference>
<sequence>MITLGFMSLSRQHEADYSAELAKRAPEFGIRFIRFTPFDISPDTLRVKASVYHSASSTWNETEMAIPDYIYDRCFYGKDSHSQKAKPIVEWLKKYPKTEFIGRGLPDKWTVLHDLQQHSVINPYIPETIKVSRYEQIHSFLSKEKACILKPAFGAGGRGVILLKLGKKNITATYHIGKDKQTKTFSNQTSFKTWCKKVLQHQYLLQPYLNIQDKEQYPCDIRLFMEKNEAGEWNTVGKAVRRGYKHGLLANLSGGSDALTFDSWFEDIPKKQQVVLLDDVFSITQSVPYYLDERYGPLFELGLDICLAKDGRIWILDINSKPGRKSILRVSPEQKEQLYTCPLKRCQYLFSEQSQKGVLPRES</sequence>
<reference key="1">
    <citation type="journal article" date="1998" name="Microbiology">
        <title>The 172 kb prkA-addAB region from 83 degrees to 97 degrees of the Bacillus subtilis chromosome contains several dysfunctional genes, the glyB marker, many genes encoding transporter proteins, and the ubiquitous hit gene.</title>
        <authorList>
            <person name="Noback M.A."/>
            <person name="Holsappel S."/>
            <person name="Kiewiet R."/>
            <person name="Terpstra P."/>
            <person name="Wambutt R."/>
            <person name="Wedler H."/>
            <person name="Venema G."/>
            <person name="Bron S."/>
        </authorList>
    </citation>
    <scope>NUCLEOTIDE SEQUENCE [GENOMIC DNA]</scope>
    <source>
        <strain>168</strain>
    </source>
</reference>
<reference key="2">
    <citation type="journal article" date="1997" name="Nature">
        <title>The complete genome sequence of the Gram-positive bacterium Bacillus subtilis.</title>
        <authorList>
            <person name="Kunst F."/>
            <person name="Ogasawara N."/>
            <person name="Moszer I."/>
            <person name="Albertini A.M."/>
            <person name="Alloni G."/>
            <person name="Azevedo V."/>
            <person name="Bertero M.G."/>
            <person name="Bessieres P."/>
            <person name="Bolotin A."/>
            <person name="Borchert S."/>
            <person name="Borriss R."/>
            <person name="Boursier L."/>
            <person name="Brans A."/>
            <person name="Braun M."/>
            <person name="Brignell S.C."/>
            <person name="Bron S."/>
            <person name="Brouillet S."/>
            <person name="Bruschi C.V."/>
            <person name="Caldwell B."/>
            <person name="Capuano V."/>
            <person name="Carter N.M."/>
            <person name="Choi S.-K."/>
            <person name="Codani J.-J."/>
            <person name="Connerton I.F."/>
            <person name="Cummings N.J."/>
            <person name="Daniel R.A."/>
            <person name="Denizot F."/>
            <person name="Devine K.M."/>
            <person name="Duesterhoeft A."/>
            <person name="Ehrlich S.D."/>
            <person name="Emmerson P.T."/>
            <person name="Entian K.-D."/>
            <person name="Errington J."/>
            <person name="Fabret C."/>
            <person name="Ferrari E."/>
            <person name="Foulger D."/>
            <person name="Fritz C."/>
            <person name="Fujita M."/>
            <person name="Fujita Y."/>
            <person name="Fuma S."/>
            <person name="Galizzi A."/>
            <person name="Galleron N."/>
            <person name="Ghim S.-Y."/>
            <person name="Glaser P."/>
            <person name="Goffeau A."/>
            <person name="Golightly E.J."/>
            <person name="Grandi G."/>
            <person name="Guiseppi G."/>
            <person name="Guy B.J."/>
            <person name="Haga K."/>
            <person name="Haiech J."/>
            <person name="Harwood C.R."/>
            <person name="Henaut A."/>
            <person name="Hilbert H."/>
            <person name="Holsappel S."/>
            <person name="Hosono S."/>
            <person name="Hullo M.-F."/>
            <person name="Itaya M."/>
            <person name="Jones L.-M."/>
            <person name="Joris B."/>
            <person name="Karamata D."/>
            <person name="Kasahara Y."/>
            <person name="Klaerr-Blanchard M."/>
            <person name="Klein C."/>
            <person name="Kobayashi Y."/>
            <person name="Koetter P."/>
            <person name="Koningstein G."/>
            <person name="Krogh S."/>
            <person name="Kumano M."/>
            <person name="Kurita K."/>
            <person name="Lapidus A."/>
            <person name="Lardinois S."/>
            <person name="Lauber J."/>
            <person name="Lazarevic V."/>
            <person name="Lee S.-M."/>
            <person name="Levine A."/>
            <person name="Liu H."/>
            <person name="Masuda S."/>
            <person name="Mauel C."/>
            <person name="Medigue C."/>
            <person name="Medina N."/>
            <person name="Mellado R.P."/>
            <person name="Mizuno M."/>
            <person name="Moestl D."/>
            <person name="Nakai S."/>
            <person name="Noback M."/>
            <person name="Noone D."/>
            <person name="O'Reilly M."/>
            <person name="Ogawa K."/>
            <person name="Ogiwara A."/>
            <person name="Oudega B."/>
            <person name="Park S.-H."/>
            <person name="Parro V."/>
            <person name="Pohl T.M."/>
            <person name="Portetelle D."/>
            <person name="Porwollik S."/>
            <person name="Prescott A.M."/>
            <person name="Presecan E."/>
            <person name="Pujic P."/>
            <person name="Purnelle B."/>
            <person name="Rapoport G."/>
            <person name="Rey M."/>
            <person name="Reynolds S."/>
            <person name="Rieger M."/>
            <person name="Rivolta C."/>
            <person name="Rocha E."/>
            <person name="Roche B."/>
            <person name="Rose M."/>
            <person name="Sadaie Y."/>
            <person name="Sato T."/>
            <person name="Scanlan E."/>
            <person name="Schleich S."/>
            <person name="Schroeter R."/>
            <person name="Scoffone F."/>
            <person name="Sekiguchi J."/>
            <person name="Sekowska A."/>
            <person name="Seror S.J."/>
            <person name="Serror P."/>
            <person name="Shin B.-S."/>
            <person name="Soldo B."/>
            <person name="Sorokin A."/>
            <person name="Tacconi E."/>
            <person name="Takagi T."/>
            <person name="Takahashi H."/>
            <person name="Takemaru K."/>
            <person name="Takeuchi M."/>
            <person name="Tamakoshi A."/>
            <person name="Tanaka T."/>
            <person name="Terpstra P."/>
            <person name="Tognoni A."/>
            <person name="Tosato V."/>
            <person name="Uchiyama S."/>
            <person name="Vandenbol M."/>
            <person name="Vannier F."/>
            <person name="Vassarotti A."/>
            <person name="Viari A."/>
            <person name="Wambutt R."/>
            <person name="Wedler E."/>
            <person name="Wedler H."/>
            <person name="Weitzenegger T."/>
            <person name="Winters P."/>
            <person name="Wipat A."/>
            <person name="Yamamoto H."/>
            <person name="Yamane K."/>
            <person name="Yasumoto K."/>
            <person name="Yata K."/>
            <person name="Yoshida K."/>
            <person name="Yoshikawa H.-F."/>
            <person name="Zumstein E."/>
            <person name="Yoshikawa H."/>
            <person name="Danchin A."/>
        </authorList>
    </citation>
    <scope>NUCLEOTIDE SEQUENCE [LARGE SCALE GENOMIC DNA]</scope>
    <source>
        <strain>168</strain>
    </source>
</reference>
<feature type="chain" id="PRO_0000360434" description="Endospore coat-associated protein YheC">
    <location>
        <begin position="1"/>
        <end position="363"/>
    </location>
</feature>
<accession>O07544</accession>
<accession>Q796W2</accession>
<evidence type="ECO:0000250" key="1"/>
<evidence type="ECO:0000305" key="2"/>
<comment type="function">
    <text evidence="1">Involved in sporulation.</text>
</comment>
<comment type="subcellular location">
    <subcellularLocation>
        <location evidence="1">Forespore outer membrane</location>
        <topology evidence="1">Peripheral membrane protein</topology>
    </subcellularLocation>
    <subcellularLocation>
        <location evidence="1">Spore coat</location>
    </subcellularLocation>
</comment>
<comment type="similarity">
    <text evidence="2">Belongs to the YheC/YheD family.</text>
</comment>
<name>YHEC_BACSU</name>